<accession>A5DWF1</accession>
<reference key="1">
    <citation type="journal article" date="2009" name="Nature">
        <title>Evolution of pathogenicity and sexual reproduction in eight Candida genomes.</title>
        <authorList>
            <person name="Butler G."/>
            <person name="Rasmussen M.D."/>
            <person name="Lin M.F."/>
            <person name="Santos M.A.S."/>
            <person name="Sakthikumar S."/>
            <person name="Munro C.A."/>
            <person name="Rheinbay E."/>
            <person name="Grabherr M."/>
            <person name="Forche A."/>
            <person name="Reedy J.L."/>
            <person name="Agrafioti I."/>
            <person name="Arnaud M.B."/>
            <person name="Bates S."/>
            <person name="Brown A.J.P."/>
            <person name="Brunke S."/>
            <person name="Costanzo M.C."/>
            <person name="Fitzpatrick D.A."/>
            <person name="de Groot P.W.J."/>
            <person name="Harris D."/>
            <person name="Hoyer L.L."/>
            <person name="Hube B."/>
            <person name="Klis F.M."/>
            <person name="Kodira C."/>
            <person name="Lennard N."/>
            <person name="Logue M.E."/>
            <person name="Martin R."/>
            <person name="Neiman A.M."/>
            <person name="Nikolaou E."/>
            <person name="Quail M.A."/>
            <person name="Quinn J."/>
            <person name="Santos M.C."/>
            <person name="Schmitzberger F.F."/>
            <person name="Sherlock G."/>
            <person name="Shah P."/>
            <person name="Silverstein K.A.T."/>
            <person name="Skrzypek M.S."/>
            <person name="Soll D."/>
            <person name="Staggs R."/>
            <person name="Stansfield I."/>
            <person name="Stumpf M.P.H."/>
            <person name="Sudbery P.E."/>
            <person name="Srikantha T."/>
            <person name="Zeng Q."/>
            <person name="Berman J."/>
            <person name="Berriman M."/>
            <person name="Heitman J."/>
            <person name="Gow N.A.R."/>
            <person name="Lorenz M.C."/>
            <person name="Birren B.W."/>
            <person name="Kellis M."/>
            <person name="Cuomo C.A."/>
        </authorList>
    </citation>
    <scope>NUCLEOTIDE SEQUENCE [LARGE SCALE GENOMIC DNA]</scope>
    <source>
        <strain>ATCC 11503 / BCRC 21390 / CBS 2605 / JCM 1781 / NBRC 1676 / NRRL YB-4239</strain>
    </source>
</reference>
<protein>
    <recommendedName>
        <fullName>Histone H2A.1</fullName>
    </recommendedName>
</protein>
<gene>
    <name type="primary">HTA1</name>
    <name type="ORF">LELG_01687</name>
</gene>
<keyword id="KW-0007">Acetylation</keyword>
<keyword id="KW-0158">Chromosome</keyword>
<keyword id="KW-0227">DNA damage</keyword>
<keyword id="KW-0234">DNA repair</keyword>
<keyword id="KW-0238">DNA-binding</keyword>
<keyword id="KW-0488">Methylation</keyword>
<keyword id="KW-0544">Nucleosome core</keyword>
<keyword id="KW-0539">Nucleus</keyword>
<keyword id="KW-0597">Phosphoprotein</keyword>
<keyword id="KW-1185">Reference proteome</keyword>
<feature type="initiator methionine" description="Removed" evidence="1">
    <location>
        <position position="1"/>
    </location>
</feature>
<feature type="chain" id="PRO_0000297734" description="Histone H2A.1">
    <location>
        <begin position="2"/>
        <end position="130"/>
    </location>
</feature>
<feature type="region of interest" description="Disordered" evidence="2">
    <location>
        <begin position="1"/>
        <end position="22"/>
    </location>
</feature>
<feature type="short sequence motif" description="[ST]-Q motif">
    <location>
        <begin position="127"/>
        <end position="128"/>
    </location>
</feature>
<feature type="modified residue" description="N-acetylserine" evidence="1">
    <location>
        <position position="2"/>
    </location>
</feature>
<feature type="modified residue" description="N6-acetyllysine" evidence="1">
    <location>
        <position position="5"/>
    </location>
</feature>
<feature type="modified residue" description="N6-acetyllysine" evidence="1">
    <location>
        <position position="7"/>
    </location>
</feature>
<feature type="modified residue" description="N5-methylglutamine" evidence="1">
    <location>
        <position position="105"/>
    </location>
</feature>
<feature type="modified residue" description="Phosphoserine" evidence="1">
    <location>
        <position position="127"/>
    </location>
</feature>
<name>H2A1_LODEL</name>
<proteinExistence type="inferred from homology"/>
<evidence type="ECO:0000250" key="1"/>
<evidence type="ECO:0000256" key="2">
    <source>
        <dbReference type="SAM" id="MobiDB-lite"/>
    </source>
</evidence>
<evidence type="ECO:0000305" key="3"/>
<sequence length="130" mass="13805">MSGGKGKAGSSEKASTSRSAKAGLTFPVGRVHRLLRKGNYAQRIGSGAPVYLTSVLEYLAAEILELAGNAARDNKKSRIIPRHLQLAIRNDEELNKLLGHVTIAQGGVLPNIHQSLLPAKKAKTGASQEL</sequence>
<dbReference type="EMBL" id="CH981525">
    <property type="protein sequence ID" value="EDK43509.1"/>
    <property type="molecule type" value="Genomic_DNA"/>
</dbReference>
<dbReference type="SMR" id="A5DWF1"/>
<dbReference type="FunCoup" id="A5DWF1">
    <property type="interactions" value="1043"/>
</dbReference>
<dbReference type="STRING" id="379508.A5DWF1"/>
<dbReference type="GeneID" id="5234368"/>
<dbReference type="KEGG" id="lel:PVL30_001660"/>
<dbReference type="VEuPathDB" id="FungiDB:LELG_01687"/>
<dbReference type="eggNOG" id="KOG1756">
    <property type="taxonomic scope" value="Eukaryota"/>
</dbReference>
<dbReference type="HOGENOM" id="CLU_062828_3_1_1"/>
<dbReference type="InParanoid" id="A5DWF1"/>
<dbReference type="OMA" id="THHEYAK"/>
<dbReference type="OrthoDB" id="9421954at2759"/>
<dbReference type="Proteomes" id="UP000001996">
    <property type="component" value="Unassembled WGS sequence"/>
</dbReference>
<dbReference type="GO" id="GO:0000786">
    <property type="term" value="C:nucleosome"/>
    <property type="evidence" value="ECO:0007669"/>
    <property type="project" value="UniProtKB-KW"/>
</dbReference>
<dbReference type="GO" id="GO:0005634">
    <property type="term" value="C:nucleus"/>
    <property type="evidence" value="ECO:0007669"/>
    <property type="project" value="UniProtKB-SubCell"/>
</dbReference>
<dbReference type="GO" id="GO:0003677">
    <property type="term" value="F:DNA binding"/>
    <property type="evidence" value="ECO:0007669"/>
    <property type="project" value="UniProtKB-KW"/>
</dbReference>
<dbReference type="GO" id="GO:0046982">
    <property type="term" value="F:protein heterodimerization activity"/>
    <property type="evidence" value="ECO:0007669"/>
    <property type="project" value="InterPro"/>
</dbReference>
<dbReference type="GO" id="GO:0030527">
    <property type="term" value="F:structural constituent of chromatin"/>
    <property type="evidence" value="ECO:0007669"/>
    <property type="project" value="InterPro"/>
</dbReference>
<dbReference type="GO" id="GO:0006281">
    <property type="term" value="P:DNA repair"/>
    <property type="evidence" value="ECO:0007669"/>
    <property type="project" value="UniProtKB-KW"/>
</dbReference>
<dbReference type="CDD" id="cd00074">
    <property type="entry name" value="HFD_H2A"/>
    <property type="match status" value="1"/>
</dbReference>
<dbReference type="FunFam" id="1.10.20.10:FF:000008">
    <property type="entry name" value="Histone H2A"/>
    <property type="match status" value="1"/>
</dbReference>
<dbReference type="Gene3D" id="1.10.20.10">
    <property type="entry name" value="Histone, subunit A"/>
    <property type="match status" value="1"/>
</dbReference>
<dbReference type="InterPro" id="IPR009072">
    <property type="entry name" value="Histone-fold"/>
</dbReference>
<dbReference type="InterPro" id="IPR002119">
    <property type="entry name" value="Histone_H2A"/>
</dbReference>
<dbReference type="InterPro" id="IPR007125">
    <property type="entry name" value="Histone_H2A/H2B/H3"/>
</dbReference>
<dbReference type="InterPro" id="IPR032454">
    <property type="entry name" value="Histone_H2A_C"/>
</dbReference>
<dbReference type="InterPro" id="IPR032458">
    <property type="entry name" value="Histone_H2A_CS"/>
</dbReference>
<dbReference type="PANTHER" id="PTHR23430">
    <property type="entry name" value="HISTONE H2A"/>
    <property type="match status" value="1"/>
</dbReference>
<dbReference type="Pfam" id="PF00125">
    <property type="entry name" value="Histone"/>
    <property type="match status" value="1"/>
</dbReference>
<dbReference type="Pfam" id="PF16211">
    <property type="entry name" value="Histone_H2A_C"/>
    <property type="match status" value="1"/>
</dbReference>
<dbReference type="PRINTS" id="PR00620">
    <property type="entry name" value="HISTONEH2A"/>
</dbReference>
<dbReference type="SMART" id="SM00414">
    <property type="entry name" value="H2A"/>
    <property type="match status" value="1"/>
</dbReference>
<dbReference type="SUPFAM" id="SSF47113">
    <property type="entry name" value="Histone-fold"/>
    <property type="match status" value="1"/>
</dbReference>
<dbReference type="PROSITE" id="PS00046">
    <property type="entry name" value="HISTONE_H2A"/>
    <property type="match status" value="1"/>
</dbReference>
<organism>
    <name type="scientific">Lodderomyces elongisporus (strain ATCC 11503 / CBS 2605 / JCM 1781 / NBRC 1676 / NRRL YB-4239)</name>
    <name type="common">Yeast</name>
    <name type="synonym">Saccharomyces elongisporus</name>
    <dbReference type="NCBI Taxonomy" id="379508"/>
    <lineage>
        <taxon>Eukaryota</taxon>
        <taxon>Fungi</taxon>
        <taxon>Dikarya</taxon>
        <taxon>Ascomycota</taxon>
        <taxon>Saccharomycotina</taxon>
        <taxon>Pichiomycetes</taxon>
        <taxon>Debaryomycetaceae</taxon>
        <taxon>Candida/Lodderomyces clade</taxon>
        <taxon>Lodderomyces</taxon>
    </lineage>
</organism>
<comment type="function">
    <text>Core component of nucleosome which plays a central role in DNA double strand break (DSB) repair. Nucleosomes wrap and compact DNA into chromatin, limiting DNA accessibility to the cellular machineries which require DNA as a template. Histones thereby play a central role in transcription regulation, DNA repair, DNA replication and chromosomal stability. DNA accessibility is regulated via a complex set of post-translational modifications of histones, also called histone code, and nucleosome remodeling.</text>
</comment>
<comment type="subunit">
    <text>The nucleosome is a histone octamer containing two molecules each of H2A, H2B, H3 and H4 assembled in one H3-H4 heterotetramer and two H2A-H2B heterodimers. The octamer wraps approximately 147 bp of DNA.</text>
</comment>
<comment type="subcellular location">
    <subcellularLocation>
        <location>Nucleus</location>
    </subcellularLocation>
    <subcellularLocation>
        <location>Chromosome</location>
    </subcellularLocation>
</comment>
<comment type="domain">
    <text>The [ST]-Q motif constitutes a recognition sequence for kinases from the PI3/PI4-kinase family.</text>
</comment>
<comment type="PTM">
    <text evidence="1">Phosphorylated to form H2AS128ph (gamma-H2A) in response to DNA double-strand breaks (DSBs) generated by exogenous genotoxic agents and by stalled replication forks. Phosphorylation is dependent on the DNA damage checkpoint kinases MEC1/ATR and TEL1/ATM, spreads on either side of a detected DSB site and may mark the surrounding chromatin for recruitment of proteins required for DNA damage signaling and repair. Gamma-H2A is removed from the DNA prior to the strand invasion-primer extension step of the repair process and subsequently dephosphorylated. Dephosphorylation is necessary for efficient recovery from the DNA damage checkpoint (By similarity).</text>
</comment>
<comment type="PTM">
    <text evidence="1">Acetylated by ESA1 to form H2AK4ac and H2AK7ac.</text>
</comment>
<comment type="miscellaneous">
    <text evidence="3">In contrast to vertebrates and insects, its C-terminus is not monoubiquitinated.</text>
</comment>
<comment type="similarity">
    <text evidence="3">Belongs to the histone H2A family.</text>
</comment>
<comment type="caution">
    <text evidence="3">To ensure consistency between histone entries, we follow the 'Brno' nomenclature for histone modifications, with positions referring to those used in the literature for the 'closest' model organism. Due to slight variations in histone sequences between organisms and to the presence of initiator methionine in UniProtKB/Swiss-Prot sequences, the actual positions of modified amino acids in the sequence generally differ. In this entry the following conventions are used: H2AK4ac = acetylated Lys-5; H2AK7ac = acetylated Lys-7; H2AS128ph = phosphorylated Ser-127.</text>
</comment>